<dbReference type="EMBL" id="AL731641">
    <property type="protein sequence ID" value="CAE04894.3"/>
    <property type="molecule type" value="Genomic_DNA"/>
</dbReference>
<dbReference type="EMBL" id="AP008210">
    <property type="protein sequence ID" value="BAF14635.1"/>
    <property type="molecule type" value="Genomic_DNA"/>
</dbReference>
<dbReference type="EMBL" id="AP014960">
    <property type="protein sequence ID" value="BAS89096.1"/>
    <property type="molecule type" value="Genomic_DNA"/>
</dbReference>
<dbReference type="EMBL" id="CM000141">
    <property type="protein sequence ID" value="EAZ30652.1"/>
    <property type="molecule type" value="Genomic_DNA"/>
</dbReference>
<dbReference type="EMBL" id="AK121205">
    <property type="protein sequence ID" value="BAH00366.1"/>
    <property type="molecule type" value="mRNA"/>
</dbReference>
<dbReference type="RefSeq" id="XP_015633609.1">
    <property type="nucleotide sequence ID" value="XM_015778123.1"/>
</dbReference>
<dbReference type="SMR" id="Q7XLX6"/>
<dbReference type="FunCoup" id="Q7XLX6">
    <property type="interactions" value="805"/>
</dbReference>
<dbReference type="STRING" id="39947.Q7XLX6"/>
<dbReference type="CAZy" id="GH100">
    <property type="family name" value="Glycoside Hydrolase Family 100"/>
</dbReference>
<dbReference type="PaxDb" id="39947-Q7XLX6"/>
<dbReference type="EnsemblPlants" id="Os04t0408700-01">
    <property type="protein sequence ID" value="Os04t0408700-01"/>
    <property type="gene ID" value="Os04g0408700"/>
</dbReference>
<dbReference type="Gramene" id="Os04t0408700-01">
    <property type="protein sequence ID" value="Os04t0408700-01"/>
    <property type="gene ID" value="Os04g0408700"/>
</dbReference>
<dbReference type="KEGG" id="dosa:Os04g0408700"/>
<dbReference type="eggNOG" id="ENOG502S3X9">
    <property type="taxonomic scope" value="Eukaryota"/>
</dbReference>
<dbReference type="HOGENOM" id="CLU_172811_0_0_1"/>
<dbReference type="InParanoid" id="Q7XLX6"/>
<dbReference type="OMA" id="KMKQGVQ"/>
<dbReference type="OrthoDB" id="694010at2759"/>
<dbReference type="Proteomes" id="UP000000763">
    <property type="component" value="Chromosome 4"/>
</dbReference>
<dbReference type="Proteomes" id="UP000007752">
    <property type="component" value="Chromosome 4"/>
</dbReference>
<dbReference type="Proteomes" id="UP000059680">
    <property type="component" value="Chromosome 4"/>
</dbReference>
<dbReference type="GO" id="GO:0005634">
    <property type="term" value="C:nucleus"/>
    <property type="evidence" value="ECO:0007669"/>
    <property type="project" value="UniProtKB-SubCell"/>
</dbReference>
<dbReference type="GO" id="GO:0003677">
    <property type="term" value="F:DNA binding"/>
    <property type="evidence" value="ECO:0007669"/>
    <property type="project" value="UniProtKB-KW"/>
</dbReference>
<dbReference type="GO" id="GO:0006355">
    <property type="term" value="P:regulation of DNA-templated transcription"/>
    <property type="evidence" value="ECO:0007669"/>
    <property type="project" value="InterPro"/>
</dbReference>
<dbReference type="InterPro" id="IPR006779">
    <property type="entry name" value="S1FA_DNA-bd"/>
</dbReference>
<dbReference type="PANTHER" id="PTHR35298:SF11">
    <property type="entry name" value="DNA-BINDING PROTEIN S1FA1-RELATED"/>
    <property type="match status" value="1"/>
</dbReference>
<dbReference type="PANTHER" id="PTHR35298">
    <property type="entry name" value="DNA-BINDING PROTEIN S1FA2"/>
    <property type="match status" value="1"/>
</dbReference>
<dbReference type="Pfam" id="PF04689">
    <property type="entry name" value="S1FA"/>
    <property type="match status" value="1"/>
</dbReference>
<feature type="chain" id="PRO_0000132718" description="DNA-binding protein S1FA2">
    <location>
        <begin position="1"/>
        <end position="80"/>
    </location>
</feature>
<feature type="region of interest" description="Disordered" evidence="3">
    <location>
        <begin position="55"/>
        <end position="80"/>
    </location>
</feature>
<feature type="short sequence motif" description="Nuclear localization signal" evidence="2">
    <location>
        <begin position="54"/>
        <end position="59"/>
    </location>
</feature>
<feature type="compositionally biased region" description="Basic residues" evidence="3">
    <location>
        <begin position="55"/>
        <end position="70"/>
    </location>
</feature>
<sequence>MADQFADSANNVVIEEVNKGLNPGMIVLIVVATFLLLFFVGNYALYVYAQKTLPPRKKKPVSKKKMKREKLKQGVSAPGE</sequence>
<evidence type="ECO:0000250" key="1"/>
<evidence type="ECO:0000255" key="2"/>
<evidence type="ECO:0000256" key="3">
    <source>
        <dbReference type="SAM" id="MobiDB-lite"/>
    </source>
</evidence>
<evidence type="ECO:0000305" key="4"/>
<reference key="1">
    <citation type="journal article" date="2002" name="Nature">
        <title>Sequence and analysis of rice chromosome 4.</title>
        <authorList>
            <person name="Feng Q."/>
            <person name="Zhang Y."/>
            <person name="Hao P."/>
            <person name="Wang S."/>
            <person name="Fu G."/>
            <person name="Huang Y."/>
            <person name="Li Y."/>
            <person name="Zhu J."/>
            <person name="Liu Y."/>
            <person name="Hu X."/>
            <person name="Jia P."/>
            <person name="Zhang Y."/>
            <person name="Zhao Q."/>
            <person name="Ying K."/>
            <person name="Yu S."/>
            <person name="Tang Y."/>
            <person name="Weng Q."/>
            <person name="Zhang L."/>
            <person name="Lu Y."/>
            <person name="Mu J."/>
            <person name="Lu Y."/>
            <person name="Zhang L.S."/>
            <person name="Yu Z."/>
            <person name="Fan D."/>
            <person name="Liu X."/>
            <person name="Lu T."/>
            <person name="Li C."/>
            <person name="Wu Y."/>
            <person name="Sun T."/>
            <person name="Lei H."/>
            <person name="Li T."/>
            <person name="Hu H."/>
            <person name="Guan J."/>
            <person name="Wu M."/>
            <person name="Zhang R."/>
            <person name="Zhou B."/>
            <person name="Chen Z."/>
            <person name="Chen L."/>
            <person name="Jin Z."/>
            <person name="Wang R."/>
            <person name="Yin H."/>
            <person name="Cai Z."/>
            <person name="Ren S."/>
            <person name="Lv G."/>
            <person name="Gu W."/>
            <person name="Zhu G."/>
            <person name="Tu Y."/>
            <person name="Jia J."/>
            <person name="Zhang Y."/>
            <person name="Chen J."/>
            <person name="Kang H."/>
            <person name="Chen X."/>
            <person name="Shao C."/>
            <person name="Sun Y."/>
            <person name="Hu Q."/>
            <person name="Zhang X."/>
            <person name="Zhang W."/>
            <person name="Wang L."/>
            <person name="Ding C."/>
            <person name="Sheng H."/>
            <person name="Gu J."/>
            <person name="Chen S."/>
            <person name="Ni L."/>
            <person name="Zhu F."/>
            <person name="Chen W."/>
            <person name="Lan L."/>
            <person name="Lai Y."/>
            <person name="Cheng Z."/>
            <person name="Gu M."/>
            <person name="Jiang J."/>
            <person name="Li J."/>
            <person name="Hong G."/>
            <person name="Xue Y."/>
            <person name="Han B."/>
        </authorList>
    </citation>
    <scope>NUCLEOTIDE SEQUENCE [LARGE SCALE GENOMIC DNA]</scope>
    <source>
        <strain>cv. Nipponbare</strain>
    </source>
</reference>
<reference key="2">
    <citation type="journal article" date="2005" name="Nature">
        <title>The map-based sequence of the rice genome.</title>
        <authorList>
            <consortium name="International rice genome sequencing project (IRGSP)"/>
        </authorList>
    </citation>
    <scope>NUCLEOTIDE SEQUENCE [LARGE SCALE GENOMIC DNA]</scope>
    <source>
        <strain>cv. Nipponbare</strain>
    </source>
</reference>
<reference key="3">
    <citation type="journal article" date="2008" name="Nucleic Acids Res.">
        <title>The rice annotation project database (RAP-DB): 2008 update.</title>
        <authorList>
            <consortium name="The rice annotation project (RAP)"/>
        </authorList>
    </citation>
    <scope>GENOME REANNOTATION</scope>
    <source>
        <strain>cv. Nipponbare</strain>
    </source>
</reference>
<reference key="4">
    <citation type="journal article" date="2013" name="Rice">
        <title>Improvement of the Oryza sativa Nipponbare reference genome using next generation sequence and optical map data.</title>
        <authorList>
            <person name="Kawahara Y."/>
            <person name="de la Bastide M."/>
            <person name="Hamilton J.P."/>
            <person name="Kanamori H."/>
            <person name="McCombie W.R."/>
            <person name="Ouyang S."/>
            <person name="Schwartz D.C."/>
            <person name="Tanaka T."/>
            <person name="Wu J."/>
            <person name="Zhou S."/>
            <person name="Childs K.L."/>
            <person name="Davidson R.M."/>
            <person name="Lin H."/>
            <person name="Quesada-Ocampo L."/>
            <person name="Vaillancourt B."/>
            <person name="Sakai H."/>
            <person name="Lee S.S."/>
            <person name="Kim J."/>
            <person name="Numa H."/>
            <person name="Itoh T."/>
            <person name="Buell C.R."/>
            <person name="Matsumoto T."/>
        </authorList>
    </citation>
    <scope>GENOME REANNOTATION</scope>
    <source>
        <strain>cv. Nipponbare</strain>
    </source>
</reference>
<reference key="5">
    <citation type="journal article" date="2005" name="PLoS Biol.">
        <title>The genomes of Oryza sativa: a history of duplications.</title>
        <authorList>
            <person name="Yu J."/>
            <person name="Wang J."/>
            <person name="Lin W."/>
            <person name="Li S."/>
            <person name="Li H."/>
            <person name="Zhou J."/>
            <person name="Ni P."/>
            <person name="Dong W."/>
            <person name="Hu S."/>
            <person name="Zeng C."/>
            <person name="Zhang J."/>
            <person name="Zhang Y."/>
            <person name="Li R."/>
            <person name="Xu Z."/>
            <person name="Li S."/>
            <person name="Li X."/>
            <person name="Zheng H."/>
            <person name="Cong L."/>
            <person name="Lin L."/>
            <person name="Yin J."/>
            <person name="Geng J."/>
            <person name="Li G."/>
            <person name="Shi J."/>
            <person name="Liu J."/>
            <person name="Lv H."/>
            <person name="Li J."/>
            <person name="Wang J."/>
            <person name="Deng Y."/>
            <person name="Ran L."/>
            <person name="Shi X."/>
            <person name="Wang X."/>
            <person name="Wu Q."/>
            <person name="Li C."/>
            <person name="Ren X."/>
            <person name="Wang J."/>
            <person name="Wang X."/>
            <person name="Li D."/>
            <person name="Liu D."/>
            <person name="Zhang X."/>
            <person name="Ji Z."/>
            <person name="Zhao W."/>
            <person name="Sun Y."/>
            <person name="Zhang Z."/>
            <person name="Bao J."/>
            <person name="Han Y."/>
            <person name="Dong L."/>
            <person name="Ji J."/>
            <person name="Chen P."/>
            <person name="Wu S."/>
            <person name="Liu J."/>
            <person name="Xiao Y."/>
            <person name="Bu D."/>
            <person name="Tan J."/>
            <person name="Yang L."/>
            <person name="Ye C."/>
            <person name="Zhang J."/>
            <person name="Xu J."/>
            <person name="Zhou Y."/>
            <person name="Yu Y."/>
            <person name="Zhang B."/>
            <person name="Zhuang S."/>
            <person name="Wei H."/>
            <person name="Liu B."/>
            <person name="Lei M."/>
            <person name="Yu H."/>
            <person name="Li Y."/>
            <person name="Xu H."/>
            <person name="Wei S."/>
            <person name="He X."/>
            <person name="Fang L."/>
            <person name="Zhang Z."/>
            <person name="Zhang Y."/>
            <person name="Huang X."/>
            <person name="Su Z."/>
            <person name="Tong W."/>
            <person name="Li J."/>
            <person name="Tong Z."/>
            <person name="Li S."/>
            <person name="Ye J."/>
            <person name="Wang L."/>
            <person name="Fang L."/>
            <person name="Lei T."/>
            <person name="Chen C.-S."/>
            <person name="Chen H.-C."/>
            <person name="Xu Z."/>
            <person name="Li H."/>
            <person name="Huang H."/>
            <person name="Zhang F."/>
            <person name="Xu H."/>
            <person name="Li N."/>
            <person name="Zhao C."/>
            <person name="Li S."/>
            <person name="Dong L."/>
            <person name="Huang Y."/>
            <person name="Li L."/>
            <person name="Xi Y."/>
            <person name="Qi Q."/>
            <person name="Li W."/>
            <person name="Zhang B."/>
            <person name="Hu W."/>
            <person name="Zhang Y."/>
            <person name="Tian X."/>
            <person name="Jiao Y."/>
            <person name="Liang X."/>
            <person name="Jin J."/>
            <person name="Gao L."/>
            <person name="Zheng W."/>
            <person name="Hao B."/>
            <person name="Liu S.-M."/>
            <person name="Wang W."/>
            <person name="Yuan L."/>
            <person name="Cao M."/>
            <person name="McDermott J."/>
            <person name="Samudrala R."/>
            <person name="Wang J."/>
            <person name="Wong G.K.-S."/>
            <person name="Yang H."/>
        </authorList>
    </citation>
    <scope>NUCLEOTIDE SEQUENCE [LARGE SCALE GENOMIC DNA]</scope>
    <source>
        <strain>cv. Nipponbare</strain>
    </source>
</reference>
<reference key="6">
    <citation type="journal article" date="2003" name="Science">
        <title>Collection, mapping, and annotation of over 28,000 cDNA clones from japonica rice.</title>
        <authorList>
            <consortium name="The rice full-length cDNA consortium"/>
        </authorList>
    </citation>
    <scope>NUCLEOTIDE SEQUENCE [LARGE SCALE MRNA]</scope>
    <source>
        <strain>cv. Nipponbare</strain>
    </source>
</reference>
<gene>
    <name type="primary">S1FA2</name>
    <name type="ordered locus">Os04g0408700</name>
    <name type="ordered locus">LOC_Os04g33440</name>
    <name type="ORF">OsJ_14704</name>
    <name type="ORF">OSJNBa0042I15.16</name>
</gene>
<keyword id="KW-0238">DNA-binding</keyword>
<keyword id="KW-0539">Nucleus</keyword>
<keyword id="KW-1185">Reference proteome</keyword>
<keyword id="KW-0678">Repressor</keyword>
<keyword id="KW-0804">Transcription</keyword>
<keyword id="KW-0805">Transcription regulation</keyword>
<name>S1FA2_ORYSJ</name>
<comment type="function">
    <text evidence="1">DNA-binding protein that specifically recognizes a negative element (S1F) within the RPS1 promoter.</text>
</comment>
<comment type="subcellular location">
    <subcellularLocation>
        <location evidence="4">Nucleus</location>
    </subcellularLocation>
</comment>
<comment type="similarity">
    <text evidence="4">Belongs to the S1FA transcription factor family.</text>
</comment>
<protein>
    <recommendedName>
        <fullName>DNA-binding protein S1FA2</fullName>
    </recommendedName>
</protein>
<accession>Q7XLX6</accession>
<accession>A0A0P0WA52</accession>
<accession>Q0JDF2</accession>
<accession>Q7XLX4</accession>
<proteinExistence type="inferred from homology"/>
<organism>
    <name type="scientific">Oryza sativa subsp. japonica</name>
    <name type="common">Rice</name>
    <dbReference type="NCBI Taxonomy" id="39947"/>
    <lineage>
        <taxon>Eukaryota</taxon>
        <taxon>Viridiplantae</taxon>
        <taxon>Streptophyta</taxon>
        <taxon>Embryophyta</taxon>
        <taxon>Tracheophyta</taxon>
        <taxon>Spermatophyta</taxon>
        <taxon>Magnoliopsida</taxon>
        <taxon>Liliopsida</taxon>
        <taxon>Poales</taxon>
        <taxon>Poaceae</taxon>
        <taxon>BOP clade</taxon>
        <taxon>Oryzoideae</taxon>
        <taxon>Oryzeae</taxon>
        <taxon>Oryzinae</taxon>
        <taxon>Oryza</taxon>
        <taxon>Oryza sativa</taxon>
    </lineage>
</organism>